<organism>
    <name type="scientific">Granulibacter bethesdensis (strain ATCC BAA-1260 / CGDNIH1)</name>
    <dbReference type="NCBI Taxonomy" id="391165"/>
    <lineage>
        <taxon>Bacteria</taxon>
        <taxon>Pseudomonadati</taxon>
        <taxon>Pseudomonadota</taxon>
        <taxon>Alphaproteobacteria</taxon>
        <taxon>Acetobacterales</taxon>
        <taxon>Acetobacteraceae</taxon>
        <taxon>Granulibacter</taxon>
    </lineage>
</organism>
<reference key="1">
    <citation type="journal article" date="2007" name="J. Bacteriol.">
        <title>Genome sequence analysis of the emerging human pathogenic acetic acid bacterium Granulibacter bethesdensis.</title>
        <authorList>
            <person name="Greenberg D.E."/>
            <person name="Porcella S.F."/>
            <person name="Zelazny A.M."/>
            <person name="Virtaneva K."/>
            <person name="Sturdevant D.E."/>
            <person name="Kupko J.J. III"/>
            <person name="Barbian K.D."/>
            <person name="Babar A."/>
            <person name="Dorward D.W."/>
            <person name="Holland S.M."/>
        </authorList>
    </citation>
    <scope>NUCLEOTIDE SEQUENCE [LARGE SCALE GENOMIC DNA]</scope>
    <source>
        <strain>ATCC BAA-1260 / CGDNIH1</strain>
    </source>
</reference>
<gene>
    <name evidence="1" type="primary">murG</name>
    <name type="ordered locus">GbCGDNIH1_0429</name>
</gene>
<proteinExistence type="inferred from homology"/>
<name>MURG_GRABC</name>
<feature type="chain" id="PRO_0000315098" description="UDP-N-acetylglucosamine--N-acetylmuramyl-(pentapeptide) pyrophosphoryl-undecaprenol N-acetylglucosamine transferase">
    <location>
        <begin position="1"/>
        <end position="384"/>
    </location>
</feature>
<feature type="binding site" evidence="1">
    <location>
        <begin position="17"/>
        <end position="19"/>
    </location>
    <ligand>
        <name>UDP-N-acetyl-alpha-D-glucosamine</name>
        <dbReference type="ChEBI" id="CHEBI:57705"/>
    </ligand>
</feature>
<feature type="binding site" evidence="1">
    <location>
        <position position="131"/>
    </location>
    <ligand>
        <name>UDP-N-acetyl-alpha-D-glucosamine</name>
        <dbReference type="ChEBI" id="CHEBI:57705"/>
    </ligand>
</feature>
<feature type="binding site" evidence="1">
    <location>
        <position position="172"/>
    </location>
    <ligand>
        <name>UDP-N-acetyl-alpha-D-glucosamine</name>
        <dbReference type="ChEBI" id="CHEBI:57705"/>
    </ligand>
</feature>
<feature type="binding site" evidence="1">
    <location>
        <position position="200"/>
    </location>
    <ligand>
        <name>UDP-N-acetyl-alpha-D-glucosamine</name>
        <dbReference type="ChEBI" id="CHEBI:57705"/>
    </ligand>
</feature>
<feature type="binding site" evidence="1">
    <location>
        <position position="301"/>
    </location>
    <ligand>
        <name>UDP-N-acetyl-alpha-D-glucosamine</name>
        <dbReference type="ChEBI" id="CHEBI:57705"/>
    </ligand>
</feature>
<comment type="function">
    <text evidence="1">Cell wall formation. Catalyzes the transfer of a GlcNAc subunit on undecaprenyl-pyrophosphoryl-MurNAc-pentapeptide (lipid intermediate I) to form undecaprenyl-pyrophosphoryl-MurNAc-(pentapeptide)GlcNAc (lipid intermediate II).</text>
</comment>
<comment type="catalytic activity">
    <reaction evidence="1">
        <text>di-trans,octa-cis-undecaprenyl diphospho-N-acetyl-alpha-D-muramoyl-L-alanyl-D-glutamyl-meso-2,6-diaminopimeloyl-D-alanyl-D-alanine + UDP-N-acetyl-alpha-D-glucosamine = di-trans,octa-cis-undecaprenyl diphospho-[N-acetyl-alpha-D-glucosaminyl-(1-&gt;4)]-N-acetyl-alpha-D-muramoyl-L-alanyl-D-glutamyl-meso-2,6-diaminopimeloyl-D-alanyl-D-alanine + UDP + H(+)</text>
        <dbReference type="Rhea" id="RHEA:31227"/>
        <dbReference type="ChEBI" id="CHEBI:15378"/>
        <dbReference type="ChEBI" id="CHEBI:57705"/>
        <dbReference type="ChEBI" id="CHEBI:58223"/>
        <dbReference type="ChEBI" id="CHEBI:61387"/>
        <dbReference type="ChEBI" id="CHEBI:61388"/>
        <dbReference type="EC" id="2.4.1.227"/>
    </reaction>
</comment>
<comment type="pathway">
    <text evidence="1">Cell wall biogenesis; peptidoglycan biosynthesis.</text>
</comment>
<comment type="subcellular location">
    <subcellularLocation>
        <location evidence="1">Cell inner membrane</location>
        <topology evidence="1">Peripheral membrane protein</topology>
        <orientation evidence="1">Cytoplasmic side</orientation>
    </subcellularLocation>
</comment>
<comment type="similarity">
    <text evidence="1">Belongs to the glycosyltransferase 28 family. MurG subfamily.</text>
</comment>
<accession>Q0BV25</accession>
<sequence>MRRDQAQRPIIIAAGGTGGHFFPAEALAAELKRRGRQIVLMTDARSGGLTSTVFADTDRFVLPGAGIAGRGIRRAGQAVIALGHGVVKAGALLRRLEAGCIVGFGGYPCIPPVLGARLRARNVPVILHEQNAVLGRANRLLARKIHCLALSFASTSHVPAGTRTLVTGNPVRPAIAALAGTSYTPPGTEGVINLLILGGSLGARVLSDVVPAALALLPPALRQRMRVTQQCRAEDIDRVRMAYAACGIEAILAPFFTDVATLIADAHLVIARAGASTVAELATIGRPAIMVPLPGAIDDHQTANARILVDAQGGWMIRQPDFTPDTLAARIAGLLAEPGTLADAARNAARLGMQDAVARLADTVEQSLDTARAPQGDFKGEIKS</sequence>
<dbReference type="EC" id="2.4.1.227" evidence="1"/>
<dbReference type="EMBL" id="CP000394">
    <property type="protein sequence ID" value="ABI61327.1"/>
    <property type="molecule type" value="Genomic_DNA"/>
</dbReference>
<dbReference type="RefSeq" id="WP_011631137.1">
    <property type="nucleotide sequence ID" value="NC_008343.2"/>
</dbReference>
<dbReference type="SMR" id="Q0BV25"/>
<dbReference type="STRING" id="391165.GbCGDNIH1_0429"/>
<dbReference type="CAZy" id="GT28">
    <property type="family name" value="Glycosyltransferase Family 28"/>
</dbReference>
<dbReference type="KEGG" id="gbe:GbCGDNIH1_0429"/>
<dbReference type="eggNOG" id="COG0707">
    <property type="taxonomic scope" value="Bacteria"/>
</dbReference>
<dbReference type="HOGENOM" id="CLU_037404_2_1_5"/>
<dbReference type="OrthoDB" id="9808936at2"/>
<dbReference type="UniPathway" id="UPA00219"/>
<dbReference type="Proteomes" id="UP000001963">
    <property type="component" value="Chromosome"/>
</dbReference>
<dbReference type="GO" id="GO:0005886">
    <property type="term" value="C:plasma membrane"/>
    <property type="evidence" value="ECO:0007669"/>
    <property type="project" value="UniProtKB-SubCell"/>
</dbReference>
<dbReference type="GO" id="GO:0051991">
    <property type="term" value="F:UDP-N-acetyl-D-glucosamine:N-acetylmuramoyl-L-alanyl-D-glutamyl-meso-2,6-diaminopimelyl-D-alanyl-D-alanine-diphosphoundecaprenol 4-beta-N-acetylglucosaminlytransferase activity"/>
    <property type="evidence" value="ECO:0007669"/>
    <property type="project" value="RHEA"/>
</dbReference>
<dbReference type="GO" id="GO:0050511">
    <property type="term" value="F:undecaprenyldiphospho-muramoylpentapeptide beta-N-acetylglucosaminyltransferase activity"/>
    <property type="evidence" value="ECO:0007669"/>
    <property type="project" value="UniProtKB-UniRule"/>
</dbReference>
<dbReference type="GO" id="GO:0005975">
    <property type="term" value="P:carbohydrate metabolic process"/>
    <property type="evidence" value="ECO:0007669"/>
    <property type="project" value="InterPro"/>
</dbReference>
<dbReference type="GO" id="GO:0051301">
    <property type="term" value="P:cell division"/>
    <property type="evidence" value="ECO:0007669"/>
    <property type="project" value="UniProtKB-KW"/>
</dbReference>
<dbReference type="GO" id="GO:0071555">
    <property type="term" value="P:cell wall organization"/>
    <property type="evidence" value="ECO:0007669"/>
    <property type="project" value="UniProtKB-KW"/>
</dbReference>
<dbReference type="GO" id="GO:0030259">
    <property type="term" value="P:lipid glycosylation"/>
    <property type="evidence" value="ECO:0007669"/>
    <property type="project" value="UniProtKB-UniRule"/>
</dbReference>
<dbReference type="GO" id="GO:0009252">
    <property type="term" value="P:peptidoglycan biosynthetic process"/>
    <property type="evidence" value="ECO:0007669"/>
    <property type="project" value="UniProtKB-UniRule"/>
</dbReference>
<dbReference type="GO" id="GO:0008360">
    <property type="term" value="P:regulation of cell shape"/>
    <property type="evidence" value="ECO:0007669"/>
    <property type="project" value="UniProtKB-KW"/>
</dbReference>
<dbReference type="CDD" id="cd03785">
    <property type="entry name" value="GT28_MurG"/>
    <property type="match status" value="1"/>
</dbReference>
<dbReference type="Gene3D" id="3.40.50.2000">
    <property type="entry name" value="Glycogen Phosphorylase B"/>
    <property type="match status" value="2"/>
</dbReference>
<dbReference type="HAMAP" id="MF_00033">
    <property type="entry name" value="MurG"/>
    <property type="match status" value="1"/>
</dbReference>
<dbReference type="InterPro" id="IPR006009">
    <property type="entry name" value="GlcNAc_MurG"/>
</dbReference>
<dbReference type="InterPro" id="IPR007235">
    <property type="entry name" value="Glyco_trans_28_C"/>
</dbReference>
<dbReference type="InterPro" id="IPR004276">
    <property type="entry name" value="GlycoTrans_28_N"/>
</dbReference>
<dbReference type="NCBIfam" id="TIGR01133">
    <property type="entry name" value="murG"/>
    <property type="match status" value="1"/>
</dbReference>
<dbReference type="PANTHER" id="PTHR21015:SF22">
    <property type="entry name" value="GLYCOSYLTRANSFERASE"/>
    <property type="match status" value="1"/>
</dbReference>
<dbReference type="PANTHER" id="PTHR21015">
    <property type="entry name" value="UDP-N-ACETYLGLUCOSAMINE--N-ACETYLMURAMYL-(PENTAPEPTIDE) PYROPHOSPHORYL-UNDECAPRENOL N-ACETYLGLUCOSAMINE TRANSFERASE 1"/>
    <property type="match status" value="1"/>
</dbReference>
<dbReference type="Pfam" id="PF04101">
    <property type="entry name" value="Glyco_tran_28_C"/>
    <property type="match status" value="1"/>
</dbReference>
<dbReference type="Pfam" id="PF03033">
    <property type="entry name" value="Glyco_transf_28"/>
    <property type="match status" value="1"/>
</dbReference>
<dbReference type="SUPFAM" id="SSF53756">
    <property type="entry name" value="UDP-Glycosyltransferase/glycogen phosphorylase"/>
    <property type="match status" value="1"/>
</dbReference>
<keyword id="KW-0131">Cell cycle</keyword>
<keyword id="KW-0132">Cell division</keyword>
<keyword id="KW-0997">Cell inner membrane</keyword>
<keyword id="KW-1003">Cell membrane</keyword>
<keyword id="KW-0133">Cell shape</keyword>
<keyword id="KW-0961">Cell wall biogenesis/degradation</keyword>
<keyword id="KW-0328">Glycosyltransferase</keyword>
<keyword id="KW-0472">Membrane</keyword>
<keyword id="KW-0573">Peptidoglycan synthesis</keyword>
<keyword id="KW-1185">Reference proteome</keyword>
<keyword id="KW-0808">Transferase</keyword>
<protein>
    <recommendedName>
        <fullName evidence="1">UDP-N-acetylglucosamine--N-acetylmuramyl-(pentapeptide) pyrophosphoryl-undecaprenol N-acetylglucosamine transferase</fullName>
        <ecNumber evidence="1">2.4.1.227</ecNumber>
    </recommendedName>
    <alternativeName>
        <fullName evidence="1">Undecaprenyl-PP-MurNAc-pentapeptide-UDPGlcNAc GlcNAc transferase</fullName>
    </alternativeName>
</protein>
<evidence type="ECO:0000255" key="1">
    <source>
        <dbReference type="HAMAP-Rule" id="MF_00033"/>
    </source>
</evidence>